<proteinExistence type="inferred from homology"/>
<feature type="chain" id="PRO_1000164643" description="D-amino acid dehydrogenase">
    <location>
        <begin position="1"/>
        <end position="432"/>
    </location>
</feature>
<feature type="binding site" evidence="1">
    <location>
        <begin position="3"/>
        <end position="17"/>
    </location>
    <ligand>
        <name>FAD</name>
        <dbReference type="ChEBI" id="CHEBI:57692"/>
    </ligand>
</feature>
<reference key="1">
    <citation type="journal article" date="2009" name="PLoS ONE">
        <title>Salmonella paratyphi C: genetic divergence from Salmonella choleraesuis and pathogenic convergence with Salmonella typhi.</title>
        <authorList>
            <person name="Liu W.-Q."/>
            <person name="Feng Y."/>
            <person name="Wang Y."/>
            <person name="Zou Q.-H."/>
            <person name="Chen F."/>
            <person name="Guo J.-T."/>
            <person name="Peng Y.-H."/>
            <person name="Jin Y."/>
            <person name="Li Y.-G."/>
            <person name="Hu S.-N."/>
            <person name="Johnston R.N."/>
            <person name="Liu G.-R."/>
            <person name="Liu S.-L."/>
        </authorList>
    </citation>
    <scope>NUCLEOTIDE SEQUENCE [LARGE SCALE GENOMIC DNA]</scope>
    <source>
        <strain>RKS4594</strain>
    </source>
</reference>
<accession>C0Q330</accession>
<dbReference type="EC" id="1.4.99.-" evidence="1"/>
<dbReference type="EMBL" id="CP000857">
    <property type="protein sequence ID" value="ACN46062.1"/>
    <property type="molecule type" value="Genomic_DNA"/>
</dbReference>
<dbReference type="RefSeq" id="WP_001266933.1">
    <property type="nucleotide sequence ID" value="NC_012125.1"/>
</dbReference>
<dbReference type="SMR" id="C0Q330"/>
<dbReference type="KEGG" id="sei:SPC_1926"/>
<dbReference type="HOGENOM" id="CLU_007884_9_2_6"/>
<dbReference type="UniPathway" id="UPA00043">
    <property type="reaction ID" value="UER00498"/>
</dbReference>
<dbReference type="Proteomes" id="UP000001599">
    <property type="component" value="Chromosome"/>
</dbReference>
<dbReference type="GO" id="GO:0005737">
    <property type="term" value="C:cytoplasm"/>
    <property type="evidence" value="ECO:0007669"/>
    <property type="project" value="TreeGrafter"/>
</dbReference>
<dbReference type="GO" id="GO:0005886">
    <property type="term" value="C:plasma membrane"/>
    <property type="evidence" value="ECO:0007669"/>
    <property type="project" value="TreeGrafter"/>
</dbReference>
<dbReference type="GO" id="GO:0008718">
    <property type="term" value="F:D-amino-acid dehydrogenase activity"/>
    <property type="evidence" value="ECO:0007669"/>
    <property type="project" value="UniProtKB-UniRule"/>
</dbReference>
<dbReference type="GO" id="GO:0055130">
    <property type="term" value="P:D-alanine catabolic process"/>
    <property type="evidence" value="ECO:0007669"/>
    <property type="project" value="UniProtKB-UniPathway"/>
</dbReference>
<dbReference type="FunFam" id="3.50.50.60:FF:000020">
    <property type="entry name" value="D-amino acid dehydrogenase"/>
    <property type="match status" value="1"/>
</dbReference>
<dbReference type="Gene3D" id="3.30.9.10">
    <property type="entry name" value="D-Amino Acid Oxidase, subunit A, domain 2"/>
    <property type="match status" value="1"/>
</dbReference>
<dbReference type="Gene3D" id="3.50.50.60">
    <property type="entry name" value="FAD/NAD(P)-binding domain"/>
    <property type="match status" value="2"/>
</dbReference>
<dbReference type="HAMAP" id="MF_01202">
    <property type="entry name" value="DadA"/>
    <property type="match status" value="1"/>
</dbReference>
<dbReference type="InterPro" id="IPR023080">
    <property type="entry name" value="DadA"/>
</dbReference>
<dbReference type="InterPro" id="IPR006076">
    <property type="entry name" value="FAD-dep_OxRdtase"/>
</dbReference>
<dbReference type="InterPro" id="IPR036188">
    <property type="entry name" value="FAD/NAD-bd_sf"/>
</dbReference>
<dbReference type="NCBIfam" id="NF001933">
    <property type="entry name" value="PRK00711.1"/>
    <property type="match status" value="1"/>
</dbReference>
<dbReference type="PANTHER" id="PTHR13847:SF280">
    <property type="entry name" value="D-AMINO ACID DEHYDROGENASE"/>
    <property type="match status" value="1"/>
</dbReference>
<dbReference type="PANTHER" id="PTHR13847">
    <property type="entry name" value="SARCOSINE DEHYDROGENASE-RELATED"/>
    <property type="match status" value="1"/>
</dbReference>
<dbReference type="Pfam" id="PF01266">
    <property type="entry name" value="DAO"/>
    <property type="match status" value="1"/>
</dbReference>
<dbReference type="SUPFAM" id="SSF54373">
    <property type="entry name" value="FAD-linked reductases, C-terminal domain"/>
    <property type="match status" value="1"/>
</dbReference>
<dbReference type="SUPFAM" id="SSF51905">
    <property type="entry name" value="FAD/NAD(P)-binding domain"/>
    <property type="match status" value="1"/>
</dbReference>
<comment type="function">
    <text evidence="1">Oxidative deamination of D-amino acids.</text>
</comment>
<comment type="catalytic activity">
    <reaction evidence="1">
        <text>a D-alpha-amino acid + A + H2O = a 2-oxocarboxylate + AH2 + NH4(+)</text>
        <dbReference type="Rhea" id="RHEA:18125"/>
        <dbReference type="ChEBI" id="CHEBI:13193"/>
        <dbReference type="ChEBI" id="CHEBI:15377"/>
        <dbReference type="ChEBI" id="CHEBI:17499"/>
        <dbReference type="ChEBI" id="CHEBI:28938"/>
        <dbReference type="ChEBI" id="CHEBI:35179"/>
        <dbReference type="ChEBI" id="CHEBI:59871"/>
    </reaction>
</comment>
<comment type="cofactor">
    <cofactor evidence="1">
        <name>FAD</name>
        <dbReference type="ChEBI" id="CHEBI:57692"/>
    </cofactor>
</comment>
<comment type="pathway">
    <text>Amino-acid degradation; D-alanine degradation; NH(3) and pyruvate from D-alanine: step 1/1.</text>
</comment>
<comment type="similarity">
    <text evidence="1">Belongs to the DadA oxidoreductase family.</text>
</comment>
<name>DADA_SALPC</name>
<evidence type="ECO:0000255" key="1">
    <source>
        <dbReference type="HAMAP-Rule" id="MF_01202"/>
    </source>
</evidence>
<organism>
    <name type="scientific">Salmonella paratyphi C (strain RKS4594)</name>
    <dbReference type="NCBI Taxonomy" id="476213"/>
    <lineage>
        <taxon>Bacteria</taxon>
        <taxon>Pseudomonadati</taxon>
        <taxon>Pseudomonadota</taxon>
        <taxon>Gammaproteobacteria</taxon>
        <taxon>Enterobacterales</taxon>
        <taxon>Enterobacteriaceae</taxon>
        <taxon>Salmonella</taxon>
    </lineage>
</organism>
<protein>
    <recommendedName>
        <fullName evidence="1">D-amino acid dehydrogenase</fullName>
        <ecNumber evidence="1">1.4.99.-</ecNumber>
    </recommendedName>
</protein>
<keyword id="KW-0274">FAD</keyword>
<keyword id="KW-0285">Flavoprotein</keyword>
<keyword id="KW-0560">Oxidoreductase</keyword>
<sequence length="432" mass="47907">MRVVILGSGVVGVTSAWYLSQAGHDVTVIDRESGPAQETSAANAGQISPGYAAPWAAPGVPLKAIKWMFQRHAPLAVRLDGTPFQLKWMWQMLRNCDTRHYMENKGRMVRLAEYSRDCLKTLRAATGIEYEGRQGGTLQLFRTAQQYENATRDIAVLEDAGVPYQLLEASRLAEVEPALAEVAHKLTGGLRLPNDETGDCQLFTQRLARMAEQAGVTFRFNTPVEKLLYENDQIYGVKCADEIIKADAYVMAFGSYSTAMLKGIVDIPVYPLKGYSLTIPIVEPDGAPVSTILDETYKIAITRFDKRIRVGGMAEIVGFNTDLLQPHRETLEMVVRDLFPRGGHIEQATFWTGLRPMTPDGTPVVGRTRYKNLWLNTGHGTLGWTMACGSGQLLSDILSGRTPAIPYDDLSVARYRSDFTPTRPQRLHSAHN</sequence>
<gene>
    <name evidence="1" type="primary">dadA</name>
    <name type="ordered locus">SPC_1926</name>
</gene>